<name>ENV_HV2S2</name>
<dbReference type="EMBL" id="M86924">
    <property type="protein sequence ID" value="AAA43938.1"/>
    <property type="molecule type" value="Genomic_DNA"/>
</dbReference>
<dbReference type="PIR" id="A42535">
    <property type="entry name" value="VCLJS4"/>
</dbReference>
<dbReference type="SMR" id="P32536"/>
<dbReference type="GlyCosmos" id="P32536">
    <property type="glycosylation" value="29 sites, No reported glycans"/>
</dbReference>
<dbReference type="GO" id="GO:0044175">
    <property type="term" value="C:host cell endosome membrane"/>
    <property type="evidence" value="ECO:0007669"/>
    <property type="project" value="UniProtKB-SubCell"/>
</dbReference>
<dbReference type="GO" id="GO:0020002">
    <property type="term" value="C:host cell plasma membrane"/>
    <property type="evidence" value="ECO:0007669"/>
    <property type="project" value="UniProtKB-SubCell"/>
</dbReference>
<dbReference type="GO" id="GO:0016020">
    <property type="term" value="C:membrane"/>
    <property type="evidence" value="ECO:0007669"/>
    <property type="project" value="UniProtKB-KW"/>
</dbReference>
<dbReference type="GO" id="GO:0019031">
    <property type="term" value="C:viral envelope"/>
    <property type="evidence" value="ECO:0007669"/>
    <property type="project" value="UniProtKB-KW"/>
</dbReference>
<dbReference type="GO" id="GO:0055036">
    <property type="term" value="C:virion membrane"/>
    <property type="evidence" value="ECO:0007669"/>
    <property type="project" value="UniProtKB-SubCell"/>
</dbReference>
<dbReference type="GO" id="GO:0005198">
    <property type="term" value="F:structural molecule activity"/>
    <property type="evidence" value="ECO:0007669"/>
    <property type="project" value="InterPro"/>
</dbReference>
<dbReference type="GO" id="GO:0075512">
    <property type="term" value="P:clathrin-dependent endocytosis of virus by host cell"/>
    <property type="evidence" value="ECO:0007669"/>
    <property type="project" value="UniProtKB-KW"/>
</dbReference>
<dbReference type="GO" id="GO:0039654">
    <property type="term" value="P:fusion of virus membrane with host endosome membrane"/>
    <property type="evidence" value="ECO:0007669"/>
    <property type="project" value="UniProtKB-KW"/>
</dbReference>
<dbReference type="GO" id="GO:0052170">
    <property type="term" value="P:symbiont-mediated suppression of host innate immune response"/>
    <property type="evidence" value="ECO:0007669"/>
    <property type="project" value="UniProtKB-KW"/>
</dbReference>
<dbReference type="GO" id="GO:0039587">
    <property type="term" value="P:symbiont-mediated-mediated suppression of host tetherin activity"/>
    <property type="evidence" value="ECO:0007669"/>
    <property type="project" value="UniProtKB-KW"/>
</dbReference>
<dbReference type="GO" id="GO:0019062">
    <property type="term" value="P:virion attachment to host cell"/>
    <property type="evidence" value="ECO:0007669"/>
    <property type="project" value="UniProtKB-KW"/>
</dbReference>
<dbReference type="CDD" id="cd09909">
    <property type="entry name" value="HIV-1-like_HR1-HR2"/>
    <property type="match status" value="1"/>
</dbReference>
<dbReference type="Gene3D" id="1.10.287.210">
    <property type="match status" value="1"/>
</dbReference>
<dbReference type="Gene3D" id="2.170.40.20">
    <property type="entry name" value="Human immunodeficiency virus 1, Gp160, envelope glycoprotein"/>
    <property type="match status" value="2"/>
</dbReference>
<dbReference type="InterPro" id="IPR036377">
    <property type="entry name" value="Gp120_core_sf"/>
</dbReference>
<dbReference type="InterPro" id="IPR000328">
    <property type="entry name" value="GP41-like"/>
</dbReference>
<dbReference type="InterPro" id="IPR000777">
    <property type="entry name" value="HIV1_Gp120"/>
</dbReference>
<dbReference type="Pfam" id="PF00516">
    <property type="entry name" value="GP120"/>
    <property type="match status" value="1"/>
</dbReference>
<dbReference type="Pfam" id="PF00517">
    <property type="entry name" value="GP41"/>
    <property type="match status" value="1"/>
</dbReference>
<dbReference type="SUPFAM" id="SSF56502">
    <property type="entry name" value="gp120 core"/>
    <property type="match status" value="1"/>
</dbReference>
<dbReference type="SUPFAM" id="SSF58069">
    <property type="entry name" value="Virus ectodomain"/>
    <property type="match status" value="1"/>
</dbReference>
<sequence length="712" mass="81723">MCGRNQLFVASLLASACLIYCVQYVTVFYGVPVWRNASIPLFCATKNRDTWGTIQCLPDNDDYQEIALNVTEAFDAWNNTVTEQAVEDVWSLFETSIKPCVKLTPLCVAMRCNSTTAKNTTSTPTTTTTANTTIGENSSCIRTDNCTGLGEEEMVDCQFNMTGLERDKKKLYNETWYSKDVVCESKDTKKEKTCYMNHCNTSVITESCDKHYWDTMRFRYCAPPGFALLRCNDTNYSGFEPNCSKVVAATCTRMMETQTSTWFGFNGTRAENRTYIYWHGRDNRTIISLNKFYNLTILCKRPGNKTVVPITLMSGLVFHSQPINRRPRQAWCWFKGEWKEAMKEVKLTLAKHPRYKGTNDTEKIRFIAPGERSDPEVAYMWTNCRGEFLYCNMTWFLNWVENRTNQTQHNYVPCHIKQIINTWHKVGKNVYLPPREGQLTCNSTVTSIIANIDGGENQTNITFSAEVAELYRLELGDYKLIEVTPIGFAPTSIKRYSSAPVRNKRGVFVLGFLGFLTTAGAAMGAASLTLSAQSRTSLAGIVQQQQQLLDVVKRQQEMLRLTVWGTKNLQARVTAIEKYLKDQAQLNSWGCAFRQVCHTTVPWVNDTLTPDWNNITWQEWEQRIRNLEANISESLEQAQIQQEKNMYELQKLNSWDVFSNWFDLTSWIKYIQYGVYIVVGIIVLRMVIYVVQMLSRLRKGYRPVFSSPPAYS</sequence>
<reference key="1">
    <citation type="journal article" date="1992" name="J. Virol.">
        <title>Cytoplasmic domain truncation enhances fusion activity by the exterior glycoprotein complex of human immunodeficiency virus type 2 in selected cell types.</title>
        <authorList>
            <person name="Mulligan M.J."/>
            <person name="Yamshchikov G.V."/>
            <person name="Ritter G.D. Jr."/>
            <person name="Gao F."/>
            <person name="Jin M.J."/>
            <person name="Nail C.D."/>
            <person name="Spies C.P."/>
            <person name="Hahn B.H."/>
            <person name="Compans R.W."/>
        </authorList>
    </citation>
    <scope>NUCLEOTIDE SEQUENCE [GENOMIC DNA]</scope>
</reference>
<reference key="2">
    <citation type="journal article" date="2002" name="J. Gen. Virol.">
        <title>Human immunodeficiency virus type 2.</title>
        <authorList>
            <person name="Reeves J.D."/>
            <person name="Doms R.W."/>
        </authorList>
    </citation>
    <scope>REVIEW</scope>
</reference>
<keyword id="KW-0014">AIDS</keyword>
<keyword id="KW-0053">Apoptosis</keyword>
<keyword id="KW-1165">Clathrin-mediated endocytosis of virus by host</keyword>
<keyword id="KW-0165">Cleavage on pair of basic residues</keyword>
<keyword id="KW-0175">Coiled coil</keyword>
<keyword id="KW-1015">Disulfide bond</keyword>
<keyword id="KW-1170">Fusion of virus membrane with host endosomal membrane</keyword>
<keyword id="KW-1168">Fusion of virus membrane with host membrane</keyword>
<keyword id="KW-0325">Glycoprotein</keyword>
<keyword id="KW-1032">Host cell membrane</keyword>
<keyword id="KW-1039">Host endosome</keyword>
<keyword id="KW-1043">Host membrane</keyword>
<keyword id="KW-0945">Host-virus interaction</keyword>
<keyword id="KW-1090">Inhibition of host innate immune response by virus</keyword>
<keyword id="KW-1084">Inhibition of host tetherin by virus</keyword>
<keyword id="KW-0472">Membrane</keyword>
<keyword id="KW-0732">Signal</keyword>
<keyword id="KW-0812">Transmembrane</keyword>
<keyword id="KW-1133">Transmembrane helix</keyword>
<keyword id="KW-1161">Viral attachment to host cell</keyword>
<keyword id="KW-0261">Viral envelope protein</keyword>
<keyword id="KW-0899">Viral immunoevasion</keyword>
<keyword id="KW-1162">Viral penetration into host cytoplasm</keyword>
<keyword id="KW-0946">Virion</keyword>
<keyword id="KW-1164">Virus endocytosis by host</keyword>
<keyword id="KW-1160">Virus entry into host cell</keyword>
<comment type="function">
    <text evidence="1">The surface protein gp120 (SU) attaches the virus to the host lymphoid cell by binding to the primary receptor CD4. This interaction induces a structural rearrangement creating a high affinity binding site for a chemokine coreceptor like CXCR4 and/or CCR5. This peculiar 2 stage receptor-interaction strategy allows gp120 to maintain the highly conserved coreceptor-binding site in a cryptic conformation, protected from neutralizing antibodies. Since CD4 also displays a binding site for the disulfide-isomerase P4HB/PDI, a P4HB/PDI-CD4-CXCR4-gp120 complex may form. In that complex, P4HB/PDI could reach and reduce gp120 disulfide bonds, causing major conformational changes in gp120. TXN, another PDI family member could also be involved in disulfide rearrangements in Env during fusion. These changes are transmitted to the transmembrane protein gp41 and are thought to activate its fusogenic potential by unmasking its fusion peptide (By similarity).</text>
</comment>
<comment type="function">
    <text evidence="1">The surface protein gp120 is a ligand for CD209/DC-SIGN and CLEC4M/DC-SIGNR, which are respectively found on dendritic cells (DCs), and on endothelial cells of liver sinusoids and lymph node sinuses. These interactions allow capture of viral particles at mucosal surfaces by these cells and subsequent transmission to permissive cells. DCs are professional antigen presenting cells, critical for host immunity by inducing specific immune responses against a broad variety of pathogens. They act as sentinels in various tissues where they take up antigen, process it, and present it to T-cells following migration to lymphoid organs. HIV subverts the migration properties of dendritic cells to gain access to CD4+ T-cells in lymph nodes. Virus transmission to permissive T-cells occurs either in trans (without DCs infection, through viral capture and transmission), or in cis (following DCs productive infection, through the usual CD4-gp120 interaction), thereby inducing a robust infection. In trans infection, bound virions remain infectious over days and it is proposed that they are not degraded, but protected in non-lysosomal acidic organelles within the DCs close to the cell membrane thus contributing to the viral infectious potential during DCs' migration from the periphery to the lymphoid tissues. On arrival at lymphoid tissues, intact virions recycle back to DCs' cell surface allowing virus transmission to CD4+ T-cells. Virion capture also seems to lead to MHC-II-restricted viral antigen presentation, and probably to the activation of HIV-specific CD4+ cells (By similarity).</text>
</comment>
<comment type="function">
    <text evidence="1">The transmembrane protein gp41 (TM) acts as a class I viral fusion protein. Under the current model, the protein has at least 3 conformational states: pre-fusion native state, pre-hairpin intermediate state, and post-fusion hairpin state. During fusion of viral and target intracellular membranes, the coiled coil regions (heptad repeats) assume a trimer-of-hairpins structure, positioning the fusion peptide in close proximity to the C-terminal region of the ectodomain. The formation of this structure appears to drive apposition and subsequent fusion of viral and target cell membranes. Complete fusion occurs in host cell endosomes and is dynamin-dependent, however some lipid transfer might occur at the plasma membrane. The virus undergoes clathrin-dependent internalization long before endosomal fusion, thus minimizing the surface exposure of conserved viral epitopes during fusion and reducing the efficacy of inhibitors targeting these epitopes. Membranes fusion leads to delivery of the nucleocapsid into the cytoplasm (By similarity).</text>
</comment>
<comment type="function">
    <text evidence="1">The envelope glycoprotein gp160 precursor down-modulates cell surface CD4 antigen by interacting with it in the endoplasmic reticulum and blocking its transport to the cell surface.</text>
</comment>
<comment type="function">
    <text evidence="1">The gp120-gp41 heterodimer seems to contribute to T-cell depletion during HIV-1 infection. The envelope glycoproteins expressed on the surface of infected cells induce apoptosis through an interaction with uninfected cells expressing the receptor (CD4) and the coreceptors CXCR4 or CCR5. This type of bystander killing may be obtained by at least three distinct mechanisms. First, the interaction between the 2 cells can induce cellular fusion followed by nuclear fusion within the syncytium. Syncytia are condemned to die from apoptosis. Second, the 2 interacting cells may not fuse entirely and simply exchange plasma membrane lipids, after a sort of hemifusion process, followed by rapid death. Third, it is possible that virus-infected cells, on the point of undergoing apoptosis, fuse with CD4-expressing cells, in which case apoptosis is rapidly transmitted from one cell to the other and thus occurs in a sort of contagious fashion (By similarity).</text>
</comment>
<comment type="function">
    <text evidence="1">The gp120-gp41 heterodimer allows rapid transcytosis of the virus through CD4 negative cells such as simple epithelial monolayers of the intestinal, rectal and endocervical epithelial barriers. Both gp120 and gp41 specifically recognize glycosphingolipids galactosyl-ceramide (GalCer) or 3' sulfo-galactosyl-ceramide (GalS) present in the lipid rafts structures of epithelial cells. Binding to these alternative receptors allows the rapid transcytosis of the virus through the epithelial cells. This transcytotic vesicle-mediated transport of virions from the apical side to the basolateral side of the epithelial cells does not involve infection of the cells themselves (By similarity).</text>
</comment>
<comment type="subunit">
    <molecule>Surface protein gp120</molecule>
    <text evidence="1">The mature envelope protein (Env) consists of a homotrimer of non-covalently associated gp120-gp41 heterodimers. The resulting complex protrudes from the virus surface as a spike. There seems to be as few as 10 spikes on the average virion. Interacts with human CD4, CCR5 and CXCR4, to form a P4HB/PDI-CD4-CXCR4-gp120 complex. Gp120 also interacts with the C-type lectins CD209/DC-SIGN and CLEC4M/DC-SIGNR (collectively referred to as DC-SIGN(R)). Gp120 and gp41 interact with GalCer (By similarity).</text>
</comment>
<comment type="subunit">
    <molecule>Transmembrane protein gp41</molecule>
    <text evidence="1">The mature envelope protein (Env) consists of a homotrimer of non-covalently associated gp120-gp41 heterodimers. The resulting complex protrudes from the virus surface as a spike. There seems to be as few as 10 spikes on the average virion.</text>
</comment>
<comment type="subcellular location">
    <molecule>Transmembrane protein gp41</molecule>
    <subcellularLocation>
        <location evidence="1">Virion membrane</location>
        <topology evidence="1">Single-pass type I membrane protein</topology>
    </subcellularLocation>
    <subcellularLocation>
        <location evidence="1">Host cell membrane</location>
        <topology evidence="1">Single-pass type I membrane protein</topology>
    </subcellularLocation>
    <subcellularLocation>
        <location evidence="3">Host endosome membrane</location>
        <topology evidence="3">Single-pass type I membrane protein</topology>
    </subcellularLocation>
    <text evidence="1">It is probably concentrated at the site of budding and incorporated into the virions possibly by contacts between the cytoplasmic tail of Env and the N-terminus of Gag.</text>
</comment>
<comment type="subcellular location">
    <molecule>Surface protein gp120</molecule>
    <subcellularLocation>
        <location evidence="1">Virion membrane</location>
        <topology evidence="1">Peripheral membrane protein</topology>
    </subcellularLocation>
    <subcellularLocation>
        <location evidence="1">Host cell membrane</location>
        <topology evidence="1">Peripheral membrane protein</topology>
    </subcellularLocation>
    <subcellularLocation>
        <location evidence="3">Host endosome membrane</location>
        <topology evidence="3">Peripheral membrane protein</topology>
    </subcellularLocation>
    <text evidence="1">The surface protein is not anchored to the viral envelope, but associates with the extravirion surface through its binding to TM. It is probably concentrated at the site of budding and incorporated into the virions possibly by contacts between the cytoplasmic tail of Env and the N-terminus of Gag (By similarity).</text>
</comment>
<comment type="domain">
    <text evidence="1">Some of the most genetically diverse regions of the viral genome are present in Env. They are called variable regions 1 through 5 (V1 through V5). Coreceptor usage of gp120 is determined mainly by the primary structure of the third variable region (V3) in the outer domain of gp120. Binding to CCR5 involves a region adjacent in addition to V3 (By similarity).</text>
</comment>
<comment type="domain">
    <text evidence="1">The 17 amino acids long immunosuppressive region is present in many retroviral envelope proteins. Synthetic peptides derived from this relatively conserved sequence inhibit immune function in vitro and in vivo (By similarity).</text>
</comment>
<comment type="PTM">
    <text evidence="1">Specific enzymatic cleavages in vivo yield mature proteins. Envelope glycoproteins are synthesized as an inactive precursor that is heavily N-glycosylated and processed likely by host cell furin in the Golgi to yield the mature SU and TM proteins. The cleavage site between SU and TM requires the minimal sequence [KR]-X-[KR]-R (By similarity).</text>
</comment>
<comment type="miscellaneous">
    <text>Some HIV-2 isolates have been described that can infect cells independently of CD4, using CXCR4 as primary receptor. These isolates may have an exposed coreceptor binding site.</text>
</comment>
<feature type="signal peptide" evidence="2">
    <location>
        <begin position="1"/>
        <end position="24"/>
    </location>
</feature>
<feature type="chain" id="PRO_0000038453" description="Envelope glycoprotein gp160">
    <location>
        <begin position="25"/>
        <end position="712"/>
    </location>
</feature>
<feature type="chain" id="PRO_0000038454" description="Surface protein gp120" evidence="1">
    <location>
        <begin position="25"/>
        <end position="505"/>
    </location>
</feature>
<feature type="chain" id="PRO_0000038455" description="Transmembrane protein gp41" evidence="1">
    <location>
        <begin position="506"/>
        <end position="712"/>
    </location>
</feature>
<feature type="topological domain" description="Extracellular" evidence="2">
    <location>
        <begin position="25"/>
        <end position="673"/>
    </location>
</feature>
<feature type="transmembrane region" description="Helical" evidence="2">
    <location>
        <begin position="674"/>
        <end position="694"/>
    </location>
</feature>
<feature type="topological domain" description="Cytoplasmic" evidence="2">
    <location>
        <begin position="695"/>
        <end position="712"/>
    </location>
</feature>
<feature type="region of interest" description="V1">
    <location>
        <begin position="112"/>
        <end position="156"/>
    </location>
</feature>
<feature type="region of interest" description="V2">
    <location>
        <begin position="157"/>
        <end position="199"/>
    </location>
</feature>
<feature type="region of interest" description="V3">
    <location>
        <begin position="299"/>
        <end position="331"/>
    </location>
</feature>
<feature type="region of interest" description="V4">
    <location>
        <begin position="391"/>
        <end position="414"/>
    </location>
</feature>
<feature type="region of interest" description="V5">
    <location>
        <begin position="457"/>
        <end position="463"/>
    </location>
</feature>
<feature type="region of interest" description="Fusion peptide" evidence="2">
    <location>
        <begin position="506"/>
        <end position="526"/>
    </location>
</feature>
<feature type="region of interest" description="Immunosuppression" evidence="1">
    <location>
        <begin position="569"/>
        <end position="585"/>
    </location>
</feature>
<feature type="region of interest" description="MPER; binding to GalCer" evidence="1">
    <location>
        <begin position="651"/>
        <end position="672"/>
    </location>
</feature>
<feature type="coiled-coil region" evidence="2">
    <location>
        <begin position="614"/>
        <end position="646"/>
    </location>
</feature>
<feature type="short sequence motif" description="YXXV motif; contains endocytosis signal" evidence="1">
    <location>
        <begin position="701"/>
        <end position="704"/>
    </location>
</feature>
<feature type="site" description="Cleavage; by host furin" evidence="2">
    <location>
        <begin position="505"/>
        <end position="506"/>
    </location>
</feature>
<feature type="glycosylation site" description="N-linked (GlcNAc...) asparagine; by host" evidence="2">
    <location>
        <position position="36"/>
    </location>
</feature>
<feature type="glycosylation site" description="N-linked (GlcNAc...) asparagine; by host" evidence="2">
    <location>
        <position position="69"/>
    </location>
</feature>
<feature type="glycosylation site" description="N-linked (GlcNAc...) asparagine; by host" evidence="2">
    <location>
        <position position="78"/>
    </location>
</feature>
<feature type="glycosylation site" description="N-linked (GlcNAc...) asparagine; by host" evidence="2">
    <location>
        <position position="113"/>
    </location>
</feature>
<feature type="glycosylation site" description="N-linked (GlcNAc...) asparagine; by host" evidence="2">
    <location>
        <position position="119"/>
    </location>
</feature>
<feature type="glycosylation site" description="N-linked (GlcNAc...) asparagine; by host" evidence="2">
    <location>
        <position position="131"/>
    </location>
</feature>
<feature type="glycosylation site" description="N-linked (GlcNAc...) asparagine; by host" evidence="2">
    <location>
        <position position="137"/>
    </location>
</feature>
<feature type="glycosylation site" description="N-linked (GlcNAc...) asparagine; by host" evidence="2">
    <location>
        <position position="145"/>
    </location>
</feature>
<feature type="glycosylation site" description="N-linked (GlcNAc...) asparagine; by host" evidence="2">
    <location>
        <position position="160"/>
    </location>
</feature>
<feature type="glycosylation site" description="N-linked (GlcNAc...) asparagine; by host" evidence="2">
    <location>
        <position position="173"/>
    </location>
</feature>
<feature type="glycosylation site" description="N-linked (GlcNAc...) asparagine; by host" evidence="2">
    <location>
        <position position="200"/>
    </location>
</feature>
<feature type="glycosylation site" description="N-linked (GlcNAc...) asparagine; by host" evidence="2">
    <location>
        <position position="232"/>
    </location>
</feature>
<feature type="glycosylation site" description="N-linked (GlcNAc...) asparagine; by host" evidence="2">
    <location>
        <position position="235"/>
    </location>
</feature>
<feature type="glycosylation site" description="N-linked (GlcNAc...) asparagine; by host" evidence="2">
    <location>
        <position position="242"/>
    </location>
</feature>
<feature type="glycosylation site" description="N-linked (GlcNAc...) asparagine; by host" evidence="2">
    <location>
        <position position="266"/>
    </location>
</feature>
<feature type="glycosylation site" description="N-linked (GlcNAc...) asparagine; by host" evidence="2">
    <location>
        <position position="272"/>
    </location>
</feature>
<feature type="glycosylation site" description="N-linked (GlcNAc...) asparagine; by host" evidence="2">
    <location>
        <position position="283"/>
    </location>
</feature>
<feature type="glycosylation site" description="N-linked (GlcNAc...) asparagine; by host" evidence="2">
    <location>
        <position position="294"/>
    </location>
</feature>
<feature type="glycosylation site" description="N-linked (GlcNAc...) asparagine; by host" evidence="2">
    <location>
        <position position="304"/>
    </location>
</feature>
<feature type="glycosylation site" description="N-linked (GlcNAc...) asparagine; by host" evidence="2">
    <location>
        <position position="359"/>
    </location>
</feature>
<feature type="glycosylation site" description="N-linked (GlcNAc...) asparagine; by host" evidence="2">
    <location>
        <position position="392"/>
    </location>
</feature>
<feature type="glycosylation site" description="N-linked (GlcNAc...) asparagine; by host" evidence="2">
    <location>
        <position position="402"/>
    </location>
</feature>
<feature type="glycosylation site" description="N-linked (GlcNAc...) asparagine; by host" evidence="2">
    <location>
        <position position="405"/>
    </location>
</feature>
<feature type="glycosylation site" description="N-linked (GlcNAc...) asparagine; by host" evidence="2">
    <location>
        <position position="442"/>
    </location>
</feature>
<feature type="glycosylation site" description="N-linked (GlcNAc...) asparagine; by host" evidence="2">
    <location>
        <position position="457"/>
    </location>
</feature>
<feature type="glycosylation site" description="N-linked (GlcNAc...) asparagine; by host" evidence="2">
    <location>
        <position position="460"/>
    </location>
</feature>
<feature type="glycosylation site" description="N-linked (GlcNAc...) asparagine; by host" evidence="2">
    <location>
        <position position="605"/>
    </location>
</feature>
<feature type="glycosylation site" description="N-linked (GlcNAc...) asparagine; by host" evidence="2">
    <location>
        <position position="614"/>
    </location>
</feature>
<feature type="glycosylation site" description="N-linked (GlcNAc...) asparagine; by host" evidence="2">
    <location>
        <position position="630"/>
    </location>
</feature>
<feature type="disulfide bond" evidence="1">
    <location>
        <begin position="43"/>
        <end position="56"/>
    </location>
</feature>
<feature type="disulfide bond" evidence="1">
    <location>
        <begin position="100"/>
        <end position="208"/>
    </location>
</feature>
<feature type="disulfide bond" evidence="1">
    <location>
        <begin position="107"/>
        <end position="199"/>
    </location>
</feature>
<feature type="disulfide bond" evidence="1">
    <location>
        <begin position="112"/>
        <end position="157"/>
    </location>
</feature>
<feature type="disulfide bond" evidence="1">
    <location>
        <begin position="221"/>
        <end position="251"/>
    </location>
</feature>
<feature type="disulfide bond" evidence="1">
    <location>
        <begin position="231"/>
        <end position="243"/>
    </location>
</feature>
<feature type="disulfide bond" evidence="1">
    <location>
        <begin position="299"/>
        <end position="332"/>
    </location>
</feature>
<feature type="disulfide bond" evidence="1">
    <location>
        <begin position="384"/>
        <end position="441"/>
    </location>
</feature>
<feature type="disulfide bond" evidence="1">
    <location>
        <begin position="391"/>
        <end position="414"/>
    </location>
</feature>
<protein>
    <recommendedName>
        <fullName>Envelope glycoprotein gp160</fullName>
    </recommendedName>
    <alternativeName>
        <fullName>Env polyprotein</fullName>
    </alternativeName>
    <component>
        <recommendedName>
            <fullName>Surface protein gp120</fullName>
            <shortName>SU</shortName>
        </recommendedName>
        <alternativeName>
            <fullName>Glycoprotein 120</fullName>
            <shortName>gp120</shortName>
        </alternativeName>
    </component>
    <component>
        <recommendedName>
            <fullName>Transmembrane protein gp41</fullName>
            <shortName>TM</shortName>
        </recommendedName>
        <alternativeName>
            <fullName>Glycoprotein 41</fullName>
            <shortName>gp41</shortName>
        </alternativeName>
    </component>
</protein>
<gene>
    <name type="primary">env</name>
</gene>
<proteinExistence type="inferred from homology"/>
<organismHost>
    <name type="scientific">Homo sapiens</name>
    <name type="common">Human</name>
    <dbReference type="NCBI Taxonomy" id="9606"/>
</organismHost>
<organism>
    <name type="scientific">Human immunodeficiency virus type 2 subtype A (isolate ST/24.1C#2)</name>
    <name type="common">HIV-2</name>
    <dbReference type="NCBI Taxonomy" id="31681"/>
    <lineage>
        <taxon>Viruses</taxon>
        <taxon>Riboviria</taxon>
        <taxon>Pararnavirae</taxon>
        <taxon>Artverviricota</taxon>
        <taxon>Revtraviricetes</taxon>
        <taxon>Ortervirales</taxon>
        <taxon>Retroviridae</taxon>
        <taxon>Orthoretrovirinae</taxon>
        <taxon>Lentivirus</taxon>
        <taxon>Human immunodeficiency virus 2</taxon>
    </lineage>
</organism>
<evidence type="ECO:0000250" key="1"/>
<evidence type="ECO:0000255" key="2"/>
<evidence type="ECO:0000305" key="3"/>
<accession>P32536</accession>